<protein>
    <recommendedName>
        <fullName evidence="1">ATP-dependent RNA helicase RhlB</fullName>
        <ecNumber evidence="1">3.6.4.13</ecNumber>
    </recommendedName>
</protein>
<dbReference type="EC" id="3.6.4.13" evidence="1"/>
<dbReference type="EMBL" id="CP000720">
    <property type="protein sequence ID" value="ABS46390.1"/>
    <property type="molecule type" value="Genomic_DNA"/>
</dbReference>
<dbReference type="RefSeq" id="WP_002228177.1">
    <property type="nucleotide sequence ID" value="NC_009708.1"/>
</dbReference>
<dbReference type="SMR" id="A7FD47"/>
<dbReference type="GeneID" id="96663646"/>
<dbReference type="KEGG" id="ypi:YpsIP31758_0178"/>
<dbReference type="HOGENOM" id="CLU_003041_1_3_6"/>
<dbReference type="Proteomes" id="UP000002412">
    <property type="component" value="Chromosome"/>
</dbReference>
<dbReference type="GO" id="GO:0005829">
    <property type="term" value="C:cytosol"/>
    <property type="evidence" value="ECO:0007669"/>
    <property type="project" value="TreeGrafter"/>
</dbReference>
<dbReference type="GO" id="GO:0005524">
    <property type="term" value="F:ATP binding"/>
    <property type="evidence" value="ECO:0007669"/>
    <property type="project" value="UniProtKB-UniRule"/>
</dbReference>
<dbReference type="GO" id="GO:0016887">
    <property type="term" value="F:ATP hydrolysis activity"/>
    <property type="evidence" value="ECO:0007669"/>
    <property type="project" value="RHEA"/>
</dbReference>
<dbReference type="GO" id="GO:0003723">
    <property type="term" value="F:RNA binding"/>
    <property type="evidence" value="ECO:0007669"/>
    <property type="project" value="UniProtKB-UniRule"/>
</dbReference>
<dbReference type="GO" id="GO:0003724">
    <property type="term" value="F:RNA helicase activity"/>
    <property type="evidence" value="ECO:0007669"/>
    <property type="project" value="UniProtKB-UniRule"/>
</dbReference>
<dbReference type="GO" id="GO:0006401">
    <property type="term" value="P:RNA catabolic process"/>
    <property type="evidence" value="ECO:0007669"/>
    <property type="project" value="UniProtKB-UniRule"/>
</dbReference>
<dbReference type="CDD" id="cd00268">
    <property type="entry name" value="DEADc"/>
    <property type="match status" value="1"/>
</dbReference>
<dbReference type="CDD" id="cd18787">
    <property type="entry name" value="SF2_C_DEAD"/>
    <property type="match status" value="1"/>
</dbReference>
<dbReference type="FunFam" id="3.40.50.300:FF:000312">
    <property type="entry name" value="ATP-dependent RNA helicase RhlB"/>
    <property type="match status" value="1"/>
</dbReference>
<dbReference type="Gene3D" id="3.40.50.300">
    <property type="entry name" value="P-loop containing nucleotide triphosphate hydrolases"/>
    <property type="match status" value="2"/>
</dbReference>
<dbReference type="HAMAP" id="MF_00661">
    <property type="entry name" value="DEAD_helicase_RhlB"/>
    <property type="match status" value="1"/>
</dbReference>
<dbReference type="InterPro" id="IPR011545">
    <property type="entry name" value="DEAD/DEAH_box_helicase_dom"/>
</dbReference>
<dbReference type="InterPro" id="IPR050079">
    <property type="entry name" value="DEAD_box_RNA_helicase"/>
</dbReference>
<dbReference type="InterPro" id="IPR014001">
    <property type="entry name" value="Helicase_ATP-bd"/>
</dbReference>
<dbReference type="InterPro" id="IPR001650">
    <property type="entry name" value="Helicase_C-like"/>
</dbReference>
<dbReference type="InterPro" id="IPR027417">
    <property type="entry name" value="P-loop_NTPase"/>
</dbReference>
<dbReference type="InterPro" id="IPR000629">
    <property type="entry name" value="RNA-helicase_DEAD-box_CS"/>
</dbReference>
<dbReference type="InterPro" id="IPR023554">
    <property type="entry name" value="RNA_helicase_ATP-dep_RhlB"/>
</dbReference>
<dbReference type="InterPro" id="IPR014014">
    <property type="entry name" value="RNA_helicase_DEAD_Q_motif"/>
</dbReference>
<dbReference type="NCBIfam" id="NF003419">
    <property type="entry name" value="PRK04837.1"/>
    <property type="match status" value="1"/>
</dbReference>
<dbReference type="PANTHER" id="PTHR47959:SF10">
    <property type="entry name" value="ATP-DEPENDENT RNA HELICASE RHLB"/>
    <property type="match status" value="1"/>
</dbReference>
<dbReference type="PANTHER" id="PTHR47959">
    <property type="entry name" value="ATP-DEPENDENT RNA HELICASE RHLE-RELATED"/>
    <property type="match status" value="1"/>
</dbReference>
<dbReference type="Pfam" id="PF00270">
    <property type="entry name" value="DEAD"/>
    <property type="match status" value="1"/>
</dbReference>
<dbReference type="Pfam" id="PF00271">
    <property type="entry name" value="Helicase_C"/>
    <property type="match status" value="1"/>
</dbReference>
<dbReference type="SMART" id="SM00487">
    <property type="entry name" value="DEXDc"/>
    <property type="match status" value="1"/>
</dbReference>
<dbReference type="SMART" id="SM00490">
    <property type="entry name" value="HELICc"/>
    <property type="match status" value="1"/>
</dbReference>
<dbReference type="SUPFAM" id="SSF52540">
    <property type="entry name" value="P-loop containing nucleoside triphosphate hydrolases"/>
    <property type="match status" value="1"/>
</dbReference>
<dbReference type="PROSITE" id="PS00039">
    <property type="entry name" value="DEAD_ATP_HELICASE"/>
    <property type="match status" value="1"/>
</dbReference>
<dbReference type="PROSITE" id="PS51192">
    <property type="entry name" value="HELICASE_ATP_BIND_1"/>
    <property type="match status" value="1"/>
</dbReference>
<dbReference type="PROSITE" id="PS51194">
    <property type="entry name" value="HELICASE_CTER"/>
    <property type="match status" value="1"/>
</dbReference>
<dbReference type="PROSITE" id="PS51195">
    <property type="entry name" value="Q_MOTIF"/>
    <property type="match status" value="1"/>
</dbReference>
<proteinExistence type="inferred from homology"/>
<reference key="1">
    <citation type="journal article" date="2007" name="PLoS Genet.">
        <title>The complete genome sequence of Yersinia pseudotuberculosis IP31758, the causative agent of Far East scarlet-like fever.</title>
        <authorList>
            <person name="Eppinger M."/>
            <person name="Rosovitz M.J."/>
            <person name="Fricke W.F."/>
            <person name="Rasko D.A."/>
            <person name="Kokorina G."/>
            <person name="Fayolle C."/>
            <person name="Lindler L.E."/>
            <person name="Carniel E."/>
            <person name="Ravel J."/>
        </authorList>
    </citation>
    <scope>NUCLEOTIDE SEQUENCE [LARGE SCALE GENOMIC DNA]</scope>
    <source>
        <strain>IP 31758</strain>
    </source>
</reference>
<feature type="chain" id="PRO_1000082880" description="ATP-dependent RNA helicase RhlB">
    <location>
        <begin position="1"/>
        <end position="428"/>
    </location>
</feature>
<feature type="domain" description="Helicase ATP-binding" evidence="1">
    <location>
        <begin position="40"/>
        <end position="219"/>
    </location>
</feature>
<feature type="domain" description="Helicase C-terminal" evidence="1">
    <location>
        <begin position="245"/>
        <end position="390"/>
    </location>
</feature>
<feature type="region of interest" description="Disordered" evidence="2">
    <location>
        <begin position="394"/>
        <end position="428"/>
    </location>
</feature>
<feature type="short sequence motif" description="Q motif">
    <location>
        <begin position="9"/>
        <end position="37"/>
    </location>
</feature>
<feature type="short sequence motif" description="DEAD box">
    <location>
        <begin position="165"/>
        <end position="168"/>
    </location>
</feature>
<feature type="binding site" evidence="1">
    <location>
        <begin position="53"/>
        <end position="60"/>
    </location>
    <ligand>
        <name>ATP</name>
        <dbReference type="ChEBI" id="CHEBI:30616"/>
    </ligand>
</feature>
<accession>A7FD47</accession>
<sequence>MSKTHLTEQKFSDFALHPLVVEALENKGFQYCTPIQALALPLTLSGRDVAGQAQTGTGKTLAFLASTFHYLLSHPAEEGRQTNQPRALIMAPTRELAVQIHSDAESLSQVTGLKLGLAYGGDGYDKQLKVLESGVDILIGTTGRLIDYAKQNYINLGAIQVVVLDEADRMYDLGFIKDIRWLFRRMPSVDKRLNMLFSATLSYRVRELAFEQMNNAEYVEVEPLQKTGHRIKEELFYPSNEEKMRLLQTLIEEEWPDRCIIFANTKHRCEEIWGHLAADGHRVGLLTGDVAQKKRLRILEDFTKGDLDILVATDVAARGLHIPLVTHVFNYDLPDDCEDYVHRIGRTGRAGESGHSISLACEEYALNLPAIETYTGHSIPVSKYNSDALLTDLPAPKRLARTRTGNGPRRNSAPRRSGAPRNNRKRPG</sequence>
<evidence type="ECO:0000255" key="1">
    <source>
        <dbReference type="HAMAP-Rule" id="MF_00661"/>
    </source>
</evidence>
<evidence type="ECO:0000256" key="2">
    <source>
        <dbReference type="SAM" id="MobiDB-lite"/>
    </source>
</evidence>
<organism>
    <name type="scientific">Yersinia pseudotuberculosis serotype O:1b (strain IP 31758)</name>
    <dbReference type="NCBI Taxonomy" id="349747"/>
    <lineage>
        <taxon>Bacteria</taxon>
        <taxon>Pseudomonadati</taxon>
        <taxon>Pseudomonadota</taxon>
        <taxon>Gammaproteobacteria</taxon>
        <taxon>Enterobacterales</taxon>
        <taxon>Yersiniaceae</taxon>
        <taxon>Yersinia</taxon>
    </lineage>
</organism>
<name>RHLB_YERP3</name>
<keyword id="KW-0067">ATP-binding</keyword>
<keyword id="KW-0963">Cytoplasm</keyword>
<keyword id="KW-0347">Helicase</keyword>
<keyword id="KW-0378">Hydrolase</keyword>
<keyword id="KW-0547">Nucleotide-binding</keyword>
<keyword id="KW-0694">RNA-binding</keyword>
<comment type="function">
    <text evidence="1">DEAD-box RNA helicase involved in RNA degradation. Has RNA-dependent ATPase activity and unwinds double-stranded RNA.</text>
</comment>
<comment type="catalytic activity">
    <reaction evidence="1">
        <text>ATP + H2O = ADP + phosphate + H(+)</text>
        <dbReference type="Rhea" id="RHEA:13065"/>
        <dbReference type="ChEBI" id="CHEBI:15377"/>
        <dbReference type="ChEBI" id="CHEBI:15378"/>
        <dbReference type="ChEBI" id="CHEBI:30616"/>
        <dbReference type="ChEBI" id="CHEBI:43474"/>
        <dbReference type="ChEBI" id="CHEBI:456216"/>
        <dbReference type="EC" id="3.6.4.13"/>
    </reaction>
</comment>
<comment type="subunit">
    <text evidence="1">Component of the RNA degradosome, which is a multiprotein complex involved in RNA processing and mRNA degradation.</text>
</comment>
<comment type="subcellular location">
    <subcellularLocation>
        <location evidence="1">Cytoplasm</location>
    </subcellularLocation>
</comment>
<comment type="similarity">
    <text evidence="1">Belongs to the DEAD box helicase family. RhlB subfamily.</text>
</comment>
<gene>
    <name evidence="1" type="primary">rhlB</name>
    <name type="ordered locus">YpsIP31758_0178</name>
</gene>